<feature type="chain" id="PRO_0000085593" description="5'-AMP-activated protein kinase catalytic subunit alpha-1">
    <location>
        <begin position="1"/>
        <end position="559"/>
    </location>
</feature>
<feature type="domain" description="Protein kinase" evidence="4">
    <location>
        <begin position="27"/>
        <end position="279"/>
    </location>
</feature>
<feature type="region of interest" description="AIS" evidence="2">
    <location>
        <begin position="302"/>
        <end position="381"/>
    </location>
</feature>
<feature type="region of interest" description="Disordered" evidence="6">
    <location>
        <begin position="484"/>
        <end position="536"/>
    </location>
</feature>
<feature type="compositionally biased region" description="Polar residues" evidence="6">
    <location>
        <begin position="485"/>
        <end position="505"/>
    </location>
</feature>
<feature type="compositionally biased region" description="Low complexity" evidence="6">
    <location>
        <begin position="516"/>
        <end position="535"/>
    </location>
</feature>
<feature type="active site" description="Proton acceptor" evidence="4 5">
    <location>
        <position position="150"/>
    </location>
</feature>
<feature type="binding site" evidence="4">
    <location>
        <begin position="33"/>
        <end position="41"/>
    </location>
    <ligand>
        <name>ATP</name>
        <dbReference type="ChEBI" id="CHEBI:30616"/>
    </ligand>
</feature>
<feature type="binding site" evidence="4">
    <location>
        <position position="56"/>
    </location>
    <ligand>
        <name>ATP</name>
        <dbReference type="ChEBI" id="CHEBI:30616"/>
    </ligand>
</feature>
<feature type="modified residue" description="Phosphothreonine" evidence="2">
    <location>
        <position position="32"/>
    </location>
</feature>
<feature type="modified residue" description="Phosphothreonine; by LKB1 and CaMKK2" evidence="14 15 17 18 26">
    <location>
        <position position="183"/>
    </location>
</feature>
<feature type="modified residue" description="Phosphothreonine" evidence="13">
    <location>
        <position position="269"/>
    </location>
</feature>
<feature type="modified residue" description="Phosphothreonine" evidence="2">
    <location>
        <position position="355"/>
    </location>
</feature>
<feature type="modified residue" description="Phosphoserine" evidence="2">
    <location>
        <position position="356"/>
    </location>
</feature>
<feature type="modified residue" description="Phosphoserine; by ULK1" evidence="30">
    <location>
        <position position="360"/>
    </location>
</feature>
<feature type="modified residue" description="Phosphothreonine; by ULK1" evidence="30">
    <location>
        <position position="368"/>
    </location>
</feature>
<feature type="modified residue" description="Phosphothreonine" evidence="2">
    <location>
        <position position="382"/>
    </location>
</feature>
<feature type="modified residue" description="Phosphoserine; by ULK1" evidence="23">
    <location>
        <position position="397"/>
    </location>
</feature>
<feature type="modified residue" description="Phosphoserine" evidence="2">
    <location>
        <position position="467"/>
    </location>
</feature>
<feature type="modified residue" description="Phosphoserine" evidence="31">
    <location>
        <position position="486"/>
    </location>
</feature>
<feature type="modified residue" description="Phosphoserine; by ULK1" evidence="30 31">
    <location>
        <position position="486"/>
    </location>
</feature>
<feature type="modified residue" description="Phosphothreonine; by ULK1" evidence="30">
    <location>
        <position position="488"/>
    </location>
</feature>
<feature type="modified residue" description="Phosphothreonine" evidence="31">
    <location>
        <position position="490"/>
    </location>
</feature>
<feature type="modified residue" description="Phosphoserine" evidence="13 31">
    <location>
        <position position="496"/>
    </location>
</feature>
<feature type="modified residue" description="Phosphoserine" evidence="2">
    <location>
        <position position="508"/>
    </location>
</feature>
<feature type="modified residue" description="Phosphoserine" evidence="2">
    <location>
        <position position="524"/>
    </location>
</feature>
<feature type="modified residue" description="Phosphoserine" evidence="2">
    <location>
        <position position="527"/>
    </location>
</feature>
<feature type="mutagenesis site" description="Hinders activation." evidence="13">
    <original>T</original>
    <variation>E</variation>
    <location>
        <position position="183"/>
    </location>
</feature>
<feature type="mutagenesis site" description="Hinders activation." evidence="13">
    <original>T</original>
    <variation>A</variation>
    <location>
        <position position="269"/>
    </location>
</feature>
<feature type="mutagenesis site" description="Retains activation ability." evidence="13">
    <original>T</original>
    <variation>D</variation>
    <location>
        <position position="269"/>
    </location>
</feature>
<feature type="mutagenesis site" description="Allosterically activated by AMP but is not protected against dephosphorylation by AMP or ADP." evidence="22">
    <original>RHTLDE</original>
    <variation>AHALAA</variation>
    <location>
        <begin position="386"/>
        <end position="391"/>
    </location>
</feature>
<feature type="mutagenesis site" description="Hinders activation." evidence="13">
    <original>S</original>
    <variation>A</variation>
    <location>
        <position position="496"/>
    </location>
</feature>
<feature type="mutagenesis site" description="Retains activation ability." evidence="13">
    <original>S</original>
    <variation>D</variation>
    <location>
        <position position="496"/>
    </location>
</feature>
<feature type="sequence conflict" description="In Ref. 2; AAC52355." evidence="28" ref="2">
    <location>
        <begin position="13"/>
        <end position="14"/>
    </location>
</feature>
<feature type="sequence conflict" description="In Ref. 2; AA sequence." evidence="28" ref="2">
    <original>D</original>
    <variation>L</variation>
    <location>
        <position position="473"/>
    </location>
</feature>
<feature type="strand" evidence="33">
    <location>
        <begin position="27"/>
        <end position="34"/>
    </location>
</feature>
<feature type="strand" evidence="33">
    <location>
        <begin position="37"/>
        <end position="39"/>
    </location>
</feature>
<feature type="strand" evidence="33">
    <location>
        <begin position="41"/>
        <end position="46"/>
    </location>
</feature>
<feature type="turn" evidence="33">
    <location>
        <begin position="47"/>
        <end position="49"/>
    </location>
</feature>
<feature type="strand" evidence="33">
    <location>
        <begin position="52"/>
        <end position="59"/>
    </location>
</feature>
<feature type="helix" evidence="33">
    <location>
        <begin position="60"/>
        <end position="63"/>
    </location>
</feature>
<feature type="turn" evidence="33">
    <location>
        <begin position="64"/>
        <end position="67"/>
    </location>
</feature>
<feature type="helix" evidence="33">
    <location>
        <begin position="69"/>
        <end position="80"/>
    </location>
</feature>
<feature type="strand" evidence="33">
    <location>
        <begin position="90"/>
        <end position="95"/>
    </location>
</feature>
<feature type="strand" evidence="33">
    <location>
        <begin position="97"/>
        <end position="105"/>
    </location>
</feature>
<feature type="strand" evidence="36">
    <location>
        <begin position="108"/>
        <end position="111"/>
    </location>
</feature>
<feature type="turn" evidence="33">
    <location>
        <begin position="112"/>
        <end position="117"/>
    </location>
</feature>
<feature type="strand" evidence="33">
    <location>
        <begin position="118"/>
        <end position="121"/>
    </location>
</feature>
<feature type="helix" evidence="33">
    <location>
        <begin position="124"/>
        <end position="143"/>
    </location>
</feature>
<feature type="strand" evidence="35">
    <location>
        <begin position="146"/>
        <end position="149"/>
    </location>
</feature>
<feature type="strand" evidence="33">
    <location>
        <begin position="155"/>
        <end position="158"/>
    </location>
</feature>
<feature type="strand" evidence="33">
    <location>
        <begin position="164"/>
        <end position="166"/>
    </location>
</feature>
<feature type="helix" evidence="37">
    <location>
        <begin position="169"/>
        <end position="171"/>
    </location>
</feature>
<feature type="strand" evidence="33">
    <location>
        <begin position="188"/>
        <end position="190"/>
    </location>
</feature>
<feature type="helix" evidence="33">
    <location>
        <begin position="193"/>
        <end position="196"/>
    </location>
</feature>
<feature type="helix" evidence="33">
    <location>
        <begin position="204"/>
        <end position="220"/>
    </location>
</feature>
<feature type="helix" evidence="33">
    <location>
        <begin position="230"/>
        <end position="238"/>
    </location>
</feature>
<feature type="helix" evidence="33">
    <location>
        <begin position="250"/>
        <end position="259"/>
    </location>
</feature>
<feature type="turn" evidence="33">
    <location>
        <begin position="264"/>
        <end position="266"/>
    </location>
</feature>
<feature type="helix" evidence="33">
    <location>
        <begin position="270"/>
        <end position="274"/>
    </location>
</feature>
<feature type="helix" evidence="33">
    <location>
        <begin position="277"/>
        <end position="280"/>
    </location>
</feature>
<feature type="strand" evidence="33">
    <location>
        <begin position="287"/>
        <end position="289"/>
    </location>
</feature>
<feature type="helix" evidence="34">
    <location>
        <begin position="301"/>
        <end position="311"/>
    </location>
</feature>
<feature type="helix" evidence="34">
    <location>
        <begin position="315"/>
        <end position="323"/>
    </location>
</feature>
<feature type="helix" evidence="34">
    <location>
        <begin position="330"/>
        <end position="347"/>
    </location>
</feature>
<feature type="helix" evidence="33">
    <location>
        <begin position="349"/>
        <end position="351"/>
    </location>
</feature>
<feature type="helix" evidence="33">
    <location>
        <begin position="372"/>
        <end position="374"/>
    </location>
</feature>
<feature type="helix" evidence="33">
    <location>
        <begin position="376"/>
        <end position="381"/>
    </location>
</feature>
<feature type="strand" evidence="32">
    <location>
        <begin position="407"/>
        <end position="413"/>
    </location>
</feature>
<feature type="helix" evidence="32">
    <location>
        <begin position="417"/>
        <end position="430"/>
    </location>
</feature>
<feature type="strand" evidence="32">
    <location>
        <begin position="434"/>
        <end position="439"/>
    </location>
</feature>
<feature type="strand" evidence="32">
    <location>
        <begin position="442"/>
        <end position="448"/>
    </location>
</feature>
<feature type="turn" evidence="32">
    <location>
        <begin position="450"/>
        <end position="452"/>
    </location>
</feature>
<feature type="strand" evidence="32">
    <location>
        <begin position="455"/>
        <end position="464"/>
    </location>
</feature>
<feature type="strand" evidence="32">
    <location>
        <begin position="466"/>
        <end position="468"/>
    </location>
</feature>
<feature type="strand" evidence="32">
    <location>
        <begin position="470"/>
        <end position="477"/>
    </location>
</feature>
<feature type="helix" evidence="32">
    <location>
        <begin position="542"/>
        <end position="555"/>
    </location>
</feature>
<organism>
    <name type="scientific">Rattus norvegicus</name>
    <name type="common">Rat</name>
    <dbReference type="NCBI Taxonomy" id="10116"/>
    <lineage>
        <taxon>Eukaryota</taxon>
        <taxon>Metazoa</taxon>
        <taxon>Chordata</taxon>
        <taxon>Craniata</taxon>
        <taxon>Vertebrata</taxon>
        <taxon>Euteleostomi</taxon>
        <taxon>Mammalia</taxon>
        <taxon>Eutheria</taxon>
        <taxon>Euarchontoglires</taxon>
        <taxon>Glires</taxon>
        <taxon>Rodentia</taxon>
        <taxon>Myomorpha</taxon>
        <taxon>Muroidea</taxon>
        <taxon>Muridae</taxon>
        <taxon>Murinae</taxon>
        <taxon>Rattus</taxon>
    </lineage>
</organism>
<accession>P54645</accession>
<protein>
    <recommendedName>
        <fullName>5'-AMP-activated protein kinase catalytic subunit alpha-1</fullName>
        <shortName>AMPK subunit alpha-1</shortName>
        <ecNumber evidence="24 27">2.7.11.1</ecNumber>
    </recommendedName>
    <alternativeName>
        <fullName>Acetyl-CoA carboxylase kinase</fullName>
        <shortName>ACACA kinase</shortName>
    </alternativeName>
    <alternativeName>
        <fullName>Hydroxymethylglutaryl-CoA reductase kinase</fullName>
        <shortName>HMGCR kinase</shortName>
        <ecNumber evidence="24">2.7.11.31</ecNumber>
    </alternativeName>
    <alternativeName>
        <fullName>Tau-protein kinase PRKAA1</fullName>
        <ecNumber evidence="29">2.7.11.26</ecNumber>
    </alternativeName>
</protein>
<proteinExistence type="evidence at protein level"/>
<evidence type="ECO:0000250" key="1"/>
<evidence type="ECO:0000250" key="2">
    <source>
        <dbReference type="UniProtKB" id="Q13131"/>
    </source>
</evidence>
<evidence type="ECO:0000250" key="3">
    <source>
        <dbReference type="UniProtKB" id="Q5EG47"/>
    </source>
</evidence>
<evidence type="ECO:0000255" key="4">
    <source>
        <dbReference type="PROSITE-ProRule" id="PRU00159"/>
    </source>
</evidence>
<evidence type="ECO:0000255" key="5">
    <source>
        <dbReference type="PROSITE-ProRule" id="PRU10027"/>
    </source>
</evidence>
<evidence type="ECO:0000256" key="6">
    <source>
        <dbReference type="SAM" id="MobiDB-lite"/>
    </source>
</evidence>
<evidence type="ECO:0000269" key="7">
    <source>
    </source>
</evidence>
<evidence type="ECO:0000269" key="8">
    <source>
    </source>
</evidence>
<evidence type="ECO:0000269" key="9">
    <source>
    </source>
</evidence>
<evidence type="ECO:0000269" key="10">
    <source>
    </source>
</evidence>
<evidence type="ECO:0000269" key="11">
    <source>
    </source>
</evidence>
<evidence type="ECO:0000269" key="12">
    <source>
    </source>
</evidence>
<evidence type="ECO:0000269" key="13">
    <source>
    </source>
</evidence>
<evidence type="ECO:0000269" key="14">
    <source>
    </source>
</evidence>
<evidence type="ECO:0000269" key="15">
    <source>
    </source>
</evidence>
<evidence type="ECO:0000269" key="16">
    <source>
    </source>
</evidence>
<evidence type="ECO:0000269" key="17">
    <source>
    </source>
</evidence>
<evidence type="ECO:0000269" key="18">
    <source>
    </source>
</evidence>
<evidence type="ECO:0000269" key="19">
    <source>
    </source>
</evidence>
<evidence type="ECO:0000269" key="20">
    <source>
    </source>
</evidence>
<evidence type="ECO:0000269" key="21">
    <source>
    </source>
</evidence>
<evidence type="ECO:0000269" key="22">
    <source>
    </source>
</evidence>
<evidence type="ECO:0000269" key="23">
    <source>
    </source>
</evidence>
<evidence type="ECO:0000269" key="24">
    <source>
    </source>
</evidence>
<evidence type="ECO:0000269" key="25">
    <source>
    </source>
</evidence>
<evidence type="ECO:0000269" key="26">
    <source>
    </source>
</evidence>
<evidence type="ECO:0000269" key="27">
    <source>
    </source>
</evidence>
<evidence type="ECO:0000305" key="28"/>
<evidence type="ECO:0000305" key="29">
    <source>
    </source>
</evidence>
<evidence type="ECO:0000305" key="30">
    <source>
    </source>
</evidence>
<evidence type="ECO:0007744" key="31">
    <source>
    </source>
</evidence>
<evidence type="ECO:0007829" key="32">
    <source>
        <dbReference type="PDB" id="2V8Q"/>
    </source>
</evidence>
<evidence type="ECO:0007829" key="33">
    <source>
        <dbReference type="PDB" id="4CFH"/>
    </source>
</evidence>
<evidence type="ECO:0007829" key="34">
    <source>
        <dbReference type="PDB" id="4F2L"/>
    </source>
</evidence>
<evidence type="ECO:0007829" key="35">
    <source>
        <dbReference type="PDB" id="4QFG"/>
    </source>
</evidence>
<evidence type="ECO:0007829" key="36">
    <source>
        <dbReference type="PDB" id="5UFU"/>
    </source>
</evidence>
<evidence type="ECO:0007829" key="37">
    <source>
        <dbReference type="PDB" id="6E4U"/>
    </source>
</evidence>
<dbReference type="EC" id="2.7.11.1" evidence="24 27"/>
<dbReference type="EC" id="2.7.11.31" evidence="24"/>
<dbReference type="EC" id="2.7.11.26" evidence="29"/>
<dbReference type="EMBL" id="CH474048">
    <property type="status" value="NOT_ANNOTATED_CDS"/>
    <property type="molecule type" value="Genomic_DNA"/>
</dbReference>
<dbReference type="EMBL" id="U40819">
    <property type="protein sequence ID" value="AAC52355.1"/>
    <property type="molecule type" value="mRNA"/>
</dbReference>
<dbReference type="RefSeq" id="NP_062015.2">
    <property type="nucleotide sequence ID" value="NM_019142.4"/>
</dbReference>
<dbReference type="PDB" id="2V8Q">
    <property type="method" value="X-ray"/>
    <property type="resolution" value="2.10 A"/>
    <property type="chains" value="A=407-559"/>
</dbReference>
<dbReference type="PDB" id="2V92">
    <property type="method" value="X-ray"/>
    <property type="resolution" value="2.40 A"/>
    <property type="chains" value="A=407-559"/>
</dbReference>
<dbReference type="PDB" id="2V9J">
    <property type="method" value="X-ray"/>
    <property type="resolution" value="2.53 A"/>
    <property type="chains" value="A=407-559"/>
</dbReference>
<dbReference type="PDB" id="2Y8L">
    <property type="method" value="X-ray"/>
    <property type="resolution" value="2.50 A"/>
    <property type="chains" value="A=407-555"/>
</dbReference>
<dbReference type="PDB" id="2Y8Q">
    <property type="method" value="X-ray"/>
    <property type="resolution" value="2.80 A"/>
    <property type="chains" value="A=407-555"/>
</dbReference>
<dbReference type="PDB" id="2YA3">
    <property type="method" value="X-ray"/>
    <property type="resolution" value="2.51 A"/>
    <property type="chains" value="A=407-555"/>
</dbReference>
<dbReference type="PDB" id="4CFH">
    <property type="method" value="X-ray"/>
    <property type="resolution" value="3.24 A"/>
    <property type="chains" value="A=13-481, C=535-559"/>
</dbReference>
<dbReference type="PDB" id="4EAI">
    <property type="method" value="X-ray"/>
    <property type="resolution" value="2.28 A"/>
    <property type="chains" value="A=405-479, A=540-559"/>
</dbReference>
<dbReference type="PDB" id="4EAJ">
    <property type="method" value="X-ray"/>
    <property type="resolution" value="2.61 A"/>
    <property type="chains" value="A=405-479, A=540-559"/>
</dbReference>
<dbReference type="PDB" id="4EAK">
    <property type="method" value="X-ray"/>
    <property type="resolution" value="2.50 A"/>
    <property type="chains" value="A=405-479, A=540-559"/>
</dbReference>
<dbReference type="PDB" id="4EAL">
    <property type="method" value="X-ray"/>
    <property type="resolution" value="2.51 A"/>
    <property type="chains" value="A=405-479, A=540-559"/>
</dbReference>
<dbReference type="PDB" id="4F2L">
    <property type="method" value="X-ray"/>
    <property type="resolution" value="1.50 A"/>
    <property type="chains" value="A=295-347"/>
</dbReference>
<dbReference type="PDB" id="4QFG">
    <property type="method" value="X-ray"/>
    <property type="resolution" value="3.46 A"/>
    <property type="chains" value="A=11-480, A=536-559"/>
</dbReference>
<dbReference type="PDB" id="4QFR">
    <property type="method" value="X-ray"/>
    <property type="resolution" value="3.34 A"/>
    <property type="chains" value="A=11-480, A=536-559"/>
</dbReference>
<dbReference type="PDB" id="4QFS">
    <property type="method" value="X-ray"/>
    <property type="resolution" value="3.55 A"/>
    <property type="chains" value="A=11-479, A=536-559"/>
</dbReference>
<dbReference type="PDB" id="5KQ5">
    <property type="method" value="X-ray"/>
    <property type="resolution" value="3.41 A"/>
    <property type="chains" value="A=11-480, A=536-559"/>
</dbReference>
<dbReference type="PDB" id="5T5T">
    <property type="method" value="X-ray"/>
    <property type="resolution" value="3.46 A"/>
    <property type="chains" value="A=11-480, A=536-559"/>
</dbReference>
<dbReference type="PDB" id="5UFU">
    <property type="method" value="X-ray"/>
    <property type="resolution" value="3.45 A"/>
    <property type="chains" value="A=269-559"/>
</dbReference>
<dbReference type="PDB" id="6E4T">
    <property type="method" value="X-ray"/>
    <property type="resolution" value="3.40 A"/>
    <property type="chains" value="A=11-480, A=536-559"/>
</dbReference>
<dbReference type="PDB" id="6E4U">
    <property type="method" value="X-ray"/>
    <property type="resolution" value="3.27 A"/>
    <property type="chains" value="A=11-480, A=536-559"/>
</dbReference>
<dbReference type="PDB" id="6E4W">
    <property type="method" value="X-ray"/>
    <property type="resolution" value="3.35 A"/>
    <property type="chains" value="A=11-480, A=536-559"/>
</dbReference>
<dbReference type="PDBsum" id="2V8Q"/>
<dbReference type="PDBsum" id="2V92"/>
<dbReference type="PDBsum" id="2V9J"/>
<dbReference type="PDBsum" id="2Y8L"/>
<dbReference type="PDBsum" id="2Y8Q"/>
<dbReference type="PDBsum" id="2YA3"/>
<dbReference type="PDBsum" id="4CFH"/>
<dbReference type="PDBsum" id="4EAI"/>
<dbReference type="PDBsum" id="4EAJ"/>
<dbReference type="PDBsum" id="4EAK"/>
<dbReference type="PDBsum" id="4EAL"/>
<dbReference type="PDBsum" id="4F2L"/>
<dbReference type="PDBsum" id="4QFG"/>
<dbReference type="PDBsum" id="4QFR"/>
<dbReference type="PDBsum" id="4QFS"/>
<dbReference type="PDBsum" id="5KQ5"/>
<dbReference type="PDBsum" id="5T5T"/>
<dbReference type="PDBsum" id="5UFU"/>
<dbReference type="PDBsum" id="6E4T"/>
<dbReference type="PDBsum" id="6E4U"/>
<dbReference type="PDBsum" id="6E4W"/>
<dbReference type="SMR" id="P54645"/>
<dbReference type="BioGRID" id="249325">
    <property type="interactions" value="368"/>
</dbReference>
<dbReference type="CORUM" id="P54645"/>
<dbReference type="DIP" id="DIP-57168N"/>
<dbReference type="FunCoup" id="P54645">
    <property type="interactions" value="4424"/>
</dbReference>
<dbReference type="IntAct" id="P54645">
    <property type="interactions" value="317"/>
</dbReference>
<dbReference type="MINT" id="P54645"/>
<dbReference type="STRING" id="10116.ENSRNOP00000017626"/>
<dbReference type="BindingDB" id="P54645"/>
<dbReference type="ChEMBL" id="CHEMBL4533"/>
<dbReference type="iPTMnet" id="P54645"/>
<dbReference type="PhosphoSitePlus" id="P54645"/>
<dbReference type="jPOST" id="P54645"/>
<dbReference type="PaxDb" id="10116-ENSRNOP00000017626"/>
<dbReference type="Ensembl" id="ENSRNOT00000017626.6">
    <property type="protein sequence ID" value="ENSRNOP00000017626.3"/>
    <property type="gene ID" value="ENSRNOG00000012799.6"/>
</dbReference>
<dbReference type="GeneID" id="65248"/>
<dbReference type="KEGG" id="rno:65248"/>
<dbReference type="AGR" id="RGD:3387"/>
<dbReference type="CTD" id="5562"/>
<dbReference type="RGD" id="3387">
    <property type="gene designation" value="Prkaa1"/>
</dbReference>
<dbReference type="eggNOG" id="KOG0583">
    <property type="taxonomic scope" value="Eukaryota"/>
</dbReference>
<dbReference type="GeneTree" id="ENSGT00940000158865"/>
<dbReference type="HOGENOM" id="CLU_000288_59_3_1"/>
<dbReference type="InParanoid" id="P54645"/>
<dbReference type="OMA" id="GSWLKMA"/>
<dbReference type="OrthoDB" id="193931at2759"/>
<dbReference type="PhylomeDB" id="P54645"/>
<dbReference type="TreeFam" id="TF314032"/>
<dbReference type="BRENDA" id="2.7.11.1">
    <property type="organism ID" value="5301"/>
</dbReference>
<dbReference type="BRENDA" id="2.7.11.31">
    <property type="organism ID" value="5301"/>
</dbReference>
<dbReference type="Reactome" id="R-RNO-1632852">
    <property type="pathway name" value="Macroautophagy"/>
</dbReference>
<dbReference type="Reactome" id="R-RNO-380972">
    <property type="pathway name" value="Energy dependent regulation of mTOR by LKB1-AMPK"/>
</dbReference>
<dbReference type="Reactome" id="R-RNO-5628897">
    <property type="pathway name" value="TP53 Regulates Metabolic Genes"/>
</dbReference>
<dbReference type="Reactome" id="R-RNO-6804756">
    <property type="pathway name" value="Regulation of TP53 Activity through Phosphorylation"/>
</dbReference>
<dbReference type="SABIO-RK" id="P54645"/>
<dbReference type="EvolutionaryTrace" id="P54645"/>
<dbReference type="PRO" id="PR:P54645"/>
<dbReference type="Proteomes" id="UP000002494">
    <property type="component" value="Chromosome 2"/>
</dbReference>
<dbReference type="Proteomes" id="UP000234681">
    <property type="component" value="Chromosome 2"/>
</dbReference>
<dbReference type="Bgee" id="ENSRNOG00000012799">
    <property type="expression patterns" value="Expressed in ileum and 20 other cell types or tissues"/>
</dbReference>
<dbReference type="GO" id="GO:0016324">
    <property type="term" value="C:apical plasma membrane"/>
    <property type="evidence" value="ECO:0000314"/>
    <property type="project" value="UniProtKB"/>
</dbReference>
<dbReference type="GO" id="GO:0030424">
    <property type="term" value="C:axon"/>
    <property type="evidence" value="ECO:0000315"/>
    <property type="project" value="ARUK-UCL"/>
</dbReference>
<dbReference type="GO" id="GO:0000785">
    <property type="term" value="C:chromatin"/>
    <property type="evidence" value="ECO:0000266"/>
    <property type="project" value="RGD"/>
</dbReference>
<dbReference type="GO" id="GO:0036064">
    <property type="term" value="C:ciliary basal body"/>
    <property type="evidence" value="ECO:0007669"/>
    <property type="project" value="Ensembl"/>
</dbReference>
<dbReference type="GO" id="GO:0005737">
    <property type="term" value="C:cytoplasm"/>
    <property type="evidence" value="ECO:0000314"/>
    <property type="project" value="UniProtKB"/>
</dbReference>
<dbReference type="GO" id="GO:0005829">
    <property type="term" value="C:cytosol"/>
    <property type="evidence" value="ECO:0000314"/>
    <property type="project" value="RGD"/>
</dbReference>
<dbReference type="GO" id="GO:0030425">
    <property type="term" value="C:dendrite"/>
    <property type="evidence" value="ECO:0000315"/>
    <property type="project" value="ARUK-UCL"/>
</dbReference>
<dbReference type="GO" id="GO:0043025">
    <property type="term" value="C:neuronal cell body"/>
    <property type="evidence" value="ECO:0000315"/>
    <property type="project" value="ARUK-UCL"/>
</dbReference>
<dbReference type="GO" id="GO:0016607">
    <property type="term" value="C:nuclear speck"/>
    <property type="evidence" value="ECO:0007669"/>
    <property type="project" value="Ensembl"/>
</dbReference>
<dbReference type="GO" id="GO:0031588">
    <property type="term" value="C:nucleotide-activated protein kinase complex"/>
    <property type="evidence" value="ECO:0000314"/>
    <property type="project" value="UniProtKB"/>
</dbReference>
<dbReference type="GO" id="GO:0005634">
    <property type="term" value="C:nucleus"/>
    <property type="evidence" value="ECO:0000314"/>
    <property type="project" value="RGD"/>
</dbReference>
<dbReference type="GO" id="GO:0032991">
    <property type="term" value="C:protein-containing complex"/>
    <property type="evidence" value="ECO:0000314"/>
    <property type="project" value="RGD"/>
</dbReference>
<dbReference type="GO" id="GO:0047322">
    <property type="term" value="F:[hydroxymethylglutaryl-CoA reductase (NADPH)] kinase activity"/>
    <property type="evidence" value="ECO:0007669"/>
    <property type="project" value="UniProtKB-EC"/>
</dbReference>
<dbReference type="GO" id="GO:0004679">
    <property type="term" value="F:AMP-activated protein kinase activity"/>
    <property type="evidence" value="ECO:0000314"/>
    <property type="project" value="UniProtKB"/>
</dbReference>
<dbReference type="GO" id="GO:0005524">
    <property type="term" value="F:ATP binding"/>
    <property type="evidence" value="ECO:0000314"/>
    <property type="project" value="RGD"/>
</dbReference>
<dbReference type="GO" id="GO:0003682">
    <property type="term" value="F:chromatin binding"/>
    <property type="evidence" value="ECO:0000250"/>
    <property type="project" value="UniProtKB"/>
</dbReference>
<dbReference type="GO" id="GO:0042557">
    <property type="term" value="F:eukaryotic elongation factor-2 kinase activator activity"/>
    <property type="evidence" value="ECO:0000303"/>
    <property type="project" value="UniProtKB"/>
</dbReference>
<dbReference type="GO" id="GO:0140823">
    <property type="term" value="F:histone H2BS36 kinase activity"/>
    <property type="evidence" value="ECO:0000250"/>
    <property type="project" value="UniProtKB"/>
</dbReference>
<dbReference type="GO" id="GO:0046872">
    <property type="term" value="F:metal ion binding"/>
    <property type="evidence" value="ECO:0007669"/>
    <property type="project" value="UniProtKB-KW"/>
</dbReference>
<dbReference type="GO" id="GO:0004672">
    <property type="term" value="F:protein kinase activity"/>
    <property type="evidence" value="ECO:0000266"/>
    <property type="project" value="RGD"/>
</dbReference>
<dbReference type="GO" id="GO:0106310">
    <property type="term" value="F:protein serine kinase activity"/>
    <property type="evidence" value="ECO:0007669"/>
    <property type="project" value="RHEA"/>
</dbReference>
<dbReference type="GO" id="GO:0004674">
    <property type="term" value="F:protein serine/threonine kinase activity"/>
    <property type="evidence" value="ECO:0000314"/>
    <property type="project" value="RGD"/>
</dbReference>
<dbReference type="GO" id="GO:0044877">
    <property type="term" value="F:protein-containing complex binding"/>
    <property type="evidence" value="ECO:0000314"/>
    <property type="project" value="RGD"/>
</dbReference>
<dbReference type="GO" id="GO:0006914">
    <property type="term" value="P:autophagy"/>
    <property type="evidence" value="ECO:0007669"/>
    <property type="project" value="UniProtKB-KW"/>
</dbReference>
<dbReference type="GO" id="GO:0061762">
    <property type="term" value="P:CAMKK-AMPK signaling cascade"/>
    <property type="evidence" value="ECO:0000266"/>
    <property type="project" value="RGD"/>
</dbReference>
<dbReference type="GO" id="GO:0071277">
    <property type="term" value="P:cellular response to calcium ion"/>
    <property type="evidence" value="ECO:0000315"/>
    <property type="project" value="ARUK-UCL"/>
</dbReference>
<dbReference type="GO" id="GO:0071361">
    <property type="term" value="P:cellular response to ethanol"/>
    <property type="evidence" value="ECO:0000270"/>
    <property type="project" value="RGD"/>
</dbReference>
<dbReference type="GO" id="GO:0042149">
    <property type="term" value="P:cellular response to glucose starvation"/>
    <property type="evidence" value="ECO:0000250"/>
    <property type="project" value="UniProtKB"/>
</dbReference>
<dbReference type="GO" id="GO:0071333">
    <property type="term" value="P:cellular response to glucose stimulus"/>
    <property type="evidence" value="ECO:0000315"/>
    <property type="project" value="ARUK-UCL"/>
</dbReference>
<dbReference type="GO" id="GO:0070301">
    <property type="term" value="P:cellular response to hydrogen peroxide"/>
    <property type="evidence" value="ECO:0000270"/>
    <property type="project" value="RGD"/>
</dbReference>
<dbReference type="GO" id="GO:0071456">
    <property type="term" value="P:cellular response to hypoxia"/>
    <property type="evidence" value="ECO:0000270"/>
    <property type="project" value="RGD"/>
</dbReference>
<dbReference type="GO" id="GO:0031669">
    <property type="term" value="P:cellular response to nutrient levels"/>
    <property type="evidence" value="ECO:0000250"/>
    <property type="project" value="UniProtKB"/>
</dbReference>
<dbReference type="GO" id="GO:0034599">
    <property type="term" value="P:cellular response to oxidative stress"/>
    <property type="evidence" value="ECO:0000266"/>
    <property type="project" value="RGD"/>
</dbReference>
<dbReference type="GO" id="GO:0071380">
    <property type="term" value="P:cellular response to prostaglandin E stimulus"/>
    <property type="evidence" value="ECO:0000266"/>
    <property type="project" value="RGD"/>
</dbReference>
<dbReference type="GO" id="GO:0033554">
    <property type="term" value="P:cellular response to stress"/>
    <property type="evidence" value="ECO:0000266"/>
    <property type="project" value="RGD"/>
</dbReference>
<dbReference type="GO" id="GO:0071466">
    <property type="term" value="P:cellular response to xenobiotic stimulus"/>
    <property type="evidence" value="ECO:0000270"/>
    <property type="project" value="RGD"/>
</dbReference>
<dbReference type="GO" id="GO:0006695">
    <property type="term" value="P:cholesterol biosynthetic process"/>
    <property type="evidence" value="ECO:0007669"/>
    <property type="project" value="UniProtKB-KW"/>
</dbReference>
<dbReference type="GO" id="GO:0009631">
    <property type="term" value="P:cold acclimation"/>
    <property type="evidence" value="ECO:0000314"/>
    <property type="project" value="RGD"/>
</dbReference>
<dbReference type="GO" id="GO:0097009">
    <property type="term" value="P:energy homeostasis"/>
    <property type="evidence" value="ECO:0000314"/>
    <property type="project" value="UniProtKB"/>
</dbReference>
<dbReference type="GO" id="GO:0006633">
    <property type="term" value="P:fatty acid biosynthetic process"/>
    <property type="evidence" value="ECO:0007669"/>
    <property type="project" value="UniProtKB-KW"/>
</dbReference>
<dbReference type="GO" id="GO:0055089">
    <property type="term" value="P:fatty acid homeostasis"/>
    <property type="evidence" value="ECO:0000314"/>
    <property type="project" value="UniProtKB"/>
</dbReference>
<dbReference type="GO" id="GO:0019395">
    <property type="term" value="P:fatty acid oxidation"/>
    <property type="evidence" value="ECO:0000266"/>
    <property type="project" value="RGD"/>
</dbReference>
<dbReference type="GO" id="GO:0042593">
    <property type="term" value="P:glucose homeostasis"/>
    <property type="evidence" value="ECO:0000250"/>
    <property type="project" value="UniProtKB"/>
</dbReference>
<dbReference type="GO" id="GO:0006006">
    <property type="term" value="P:glucose metabolic process"/>
    <property type="evidence" value="ECO:0000266"/>
    <property type="project" value="RGD"/>
</dbReference>
<dbReference type="GO" id="GO:0008610">
    <property type="term" value="P:lipid biosynthetic process"/>
    <property type="evidence" value="ECO:0000250"/>
    <property type="project" value="UniProtKB"/>
</dbReference>
<dbReference type="GO" id="GO:1905691">
    <property type="term" value="P:lipid droplet disassembly"/>
    <property type="evidence" value="ECO:0000250"/>
    <property type="project" value="UniProtKB"/>
</dbReference>
<dbReference type="GO" id="GO:0061744">
    <property type="term" value="P:motor behavior"/>
    <property type="evidence" value="ECO:0000266"/>
    <property type="project" value="RGD"/>
</dbReference>
<dbReference type="GO" id="GO:0043066">
    <property type="term" value="P:negative regulation of apoptotic process"/>
    <property type="evidence" value="ECO:0000250"/>
    <property type="project" value="UniProtKB"/>
</dbReference>
<dbReference type="GO" id="GO:0010629">
    <property type="term" value="P:negative regulation of gene expression"/>
    <property type="evidence" value="ECO:0000266"/>
    <property type="project" value="RGD"/>
</dbReference>
<dbReference type="GO" id="GO:1903944">
    <property type="term" value="P:negative regulation of hepatocyte apoptotic process"/>
    <property type="evidence" value="ECO:0000250"/>
    <property type="project" value="UniProtKB"/>
</dbReference>
<dbReference type="GO" id="GO:0046627">
    <property type="term" value="P:negative regulation of insulin receptor signaling pathway"/>
    <property type="evidence" value="ECO:0000315"/>
    <property type="project" value="RGD"/>
</dbReference>
<dbReference type="GO" id="GO:0050995">
    <property type="term" value="P:negative regulation of lipid catabolic process"/>
    <property type="evidence" value="ECO:0000250"/>
    <property type="project" value="UniProtKB"/>
</dbReference>
<dbReference type="GO" id="GO:0032007">
    <property type="term" value="P:negative regulation of TOR signaling"/>
    <property type="evidence" value="ECO:0000250"/>
    <property type="project" value="UniProtKB"/>
</dbReference>
<dbReference type="GO" id="GO:1904262">
    <property type="term" value="P:negative regulation of TORC1 signaling"/>
    <property type="evidence" value="ECO:0000250"/>
    <property type="project" value="UniProtKB"/>
</dbReference>
<dbReference type="GO" id="GO:0017148">
    <property type="term" value="P:negative regulation of translation"/>
    <property type="evidence" value="ECO:0000303"/>
    <property type="project" value="UniProtKB"/>
</dbReference>
<dbReference type="GO" id="GO:1904428">
    <property type="term" value="P:negative regulation of tubulin deacetylation"/>
    <property type="evidence" value="ECO:0000266"/>
    <property type="project" value="RGD"/>
</dbReference>
<dbReference type="GO" id="GO:0070050">
    <property type="term" value="P:neuron cellular homeostasis"/>
    <property type="evidence" value="ECO:0000266"/>
    <property type="project" value="RGD"/>
</dbReference>
<dbReference type="GO" id="GO:1904179">
    <property type="term" value="P:positive regulation of adipose tissue development"/>
    <property type="evidence" value="ECO:0000266"/>
    <property type="project" value="RGD"/>
</dbReference>
<dbReference type="GO" id="GO:0010508">
    <property type="term" value="P:positive regulation of autophagy"/>
    <property type="evidence" value="ECO:0000250"/>
    <property type="project" value="UniProtKB"/>
</dbReference>
<dbReference type="GO" id="GO:0008284">
    <property type="term" value="P:positive regulation of cell population proliferation"/>
    <property type="evidence" value="ECO:0000314"/>
    <property type="project" value="RGD"/>
</dbReference>
<dbReference type="GO" id="GO:0046326">
    <property type="term" value="P:positive regulation of D-glucose import"/>
    <property type="evidence" value="ECO:0000303"/>
    <property type="project" value="UniProtKB"/>
</dbReference>
<dbReference type="GO" id="GO:0045893">
    <property type="term" value="P:positive regulation of DNA-templated transcription"/>
    <property type="evidence" value="ECO:0000266"/>
    <property type="project" value="RGD"/>
</dbReference>
<dbReference type="GO" id="GO:0046321">
    <property type="term" value="P:positive regulation of fatty acid oxidation"/>
    <property type="evidence" value="ECO:0000303"/>
    <property type="project" value="UniProtKB"/>
</dbReference>
<dbReference type="GO" id="GO:0010628">
    <property type="term" value="P:positive regulation of gene expression"/>
    <property type="evidence" value="ECO:0000266"/>
    <property type="project" value="RGD"/>
</dbReference>
<dbReference type="GO" id="GO:0045722">
    <property type="term" value="P:positive regulation of gluconeogenesis"/>
    <property type="evidence" value="ECO:0000303"/>
    <property type="project" value="UniProtKB"/>
</dbReference>
<dbReference type="GO" id="GO:0045821">
    <property type="term" value="P:positive regulation of glycolytic process"/>
    <property type="evidence" value="ECO:0000314"/>
    <property type="project" value="UniProtKB"/>
</dbReference>
<dbReference type="GO" id="GO:1903109">
    <property type="term" value="P:positive regulation of mitochondrial transcription"/>
    <property type="evidence" value="ECO:0000266"/>
    <property type="project" value="RGD"/>
</dbReference>
<dbReference type="GO" id="GO:1903829">
    <property type="term" value="P:positive regulation of protein localization"/>
    <property type="evidence" value="ECO:0000266"/>
    <property type="project" value="RGD"/>
</dbReference>
<dbReference type="GO" id="GO:1903955">
    <property type="term" value="P:positive regulation of protein targeting to mitochondrion"/>
    <property type="evidence" value="ECO:0000266"/>
    <property type="project" value="RGD"/>
</dbReference>
<dbReference type="GO" id="GO:0048643">
    <property type="term" value="P:positive regulation of skeletal muscle tissue development"/>
    <property type="evidence" value="ECO:0000266"/>
    <property type="project" value="RGD"/>
</dbReference>
<dbReference type="GO" id="GO:0050870">
    <property type="term" value="P:positive regulation of T cell activation"/>
    <property type="evidence" value="ECO:0000266"/>
    <property type="project" value="RGD"/>
</dbReference>
<dbReference type="GO" id="GO:0002842">
    <property type="term" value="P:positive regulation of T cell mediated immune response to tumor cell"/>
    <property type="evidence" value="ECO:0000266"/>
    <property type="project" value="RGD"/>
</dbReference>
<dbReference type="GO" id="GO:1990044">
    <property type="term" value="P:protein localization to lipid droplet"/>
    <property type="evidence" value="ECO:0000250"/>
    <property type="project" value="UniProtKB"/>
</dbReference>
<dbReference type="GO" id="GO:0006468">
    <property type="term" value="P:protein phosphorylation"/>
    <property type="evidence" value="ECO:0000303"/>
    <property type="project" value="UniProtKB"/>
</dbReference>
<dbReference type="GO" id="GO:0042752">
    <property type="term" value="P:regulation of circadian rhythm"/>
    <property type="evidence" value="ECO:0000250"/>
    <property type="project" value="UniProtKB"/>
</dbReference>
<dbReference type="GO" id="GO:0070507">
    <property type="term" value="P:regulation of microtubule cytoskeleton organization"/>
    <property type="evidence" value="ECO:0000266"/>
    <property type="project" value="RGD"/>
</dbReference>
<dbReference type="GO" id="GO:0062028">
    <property type="term" value="P:regulation of stress granule assembly"/>
    <property type="evidence" value="ECO:0000266"/>
    <property type="project" value="RGD"/>
</dbReference>
<dbReference type="GO" id="GO:0060627">
    <property type="term" value="P:regulation of vesicle-mediated transport"/>
    <property type="evidence" value="ECO:0000315"/>
    <property type="project" value="RGD"/>
</dbReference>
<dbReference type="GO" id="GO:0014823">
    <property type="term" value="P:response to activity"/>
    <property type="evidence" value="ECO:0000314"/>
    <property type="project" value="RGD"/>
</dbReference>
<dbReference type="GO" id="GO:0031000">
    <property type="term" value="P:response to caffeine"/>
    <property type="evidence" value="ECO:0000314"/>
    <property type="project" value="RGD"/>
</dbReference>
<dbReference type="GO" id="GO:0043627">
    <property type="term" value="P:response to estrogen"/>
    <property type="evidence" value="ECO:0000270"/>
    <property type="project" value="RGD"/>
</dbReference>
<dbReference type="GO" id="GO:0010332">
    <property type="term" value="P:response to gamma radiation"/>
    <property type="evidence" value="ECO:0000250"/>
    <property type="project" value="UniProtKB"/>
</dbReference>
<dbReference type="GO" id="GO:0042542">
    <property type="term" value="P:response to hydrogen peroxide"/>
    <property type="evidence" value="ECO:0000266"/>
    <property type="project" value="RGD"/>
</dbReference>
<dbReference type="GO" id="GO:0009411">
    <property type="term" value="P:response to UV"/>
    <property type="evidence" value="ECO:0000266"/>
    <property type="project" value="RGD"/>
</dbReference>
<dbReference type="GO" id="GO:0009410">
    <property type="term" value="P:response to xenobiotic stimulus"/>
    <property type="evidence" value="ECO:0000270"/>
    <property type="project" value="RGD"/>
</dbReference>
<dbReference type="GO" id="GO:0048511">
    <property type="term" value="P:rhythmic process"/>
    <property type="evidence" value="ECO:0007669"/>
    <property type="project" value="UniProtKB-KW"/>
</dbReference>
<dbReference type="GO" id="GO:0016055">
    <property type="term" value="P:Wnt signaling pathway"/>
    <property type="evidence" value="ECO:0007669"/>
    <property type="project" value="UniProtKB-KW"/>
</dbReference>
<dbReference type="CDD" id="cd12199">
    <property type="entry name" value="AMPKA1_C"/>
    <property type="match status" value="1"/>
</dbReference>
<dbReference type="CDD" id="cd14079">
    <property type="entry name" value="STKc_AMPK_alpha"/>
    <property type="match status" value="1"/>
</dbReference>
<dbReference type="CDD" id="cd14403">
    <property type="entry name" value="UBA_AID_AAPK1"/>
    <property type="match status" value="1"/>
</dbReference>
<dbReference type="FunFam" id="1.10.510.10:FF:000079">
    <property type="entry name" value="Non-specific serine/threonine protein kinase"/>
    <property type="match status" value="1"/>
</dbReference>
<dbReference type="FunFam" id="1.10.8.10:FF:000014">
    <property type="entry name" value="Non-specific serine/threonine protein kinase"/>
    <property type="match status" value="1"/>
</dbReference>
<dbReference type="FunFam" id="3.30.200.20:FF:000136">
    <property type="entry name" value="Non-specific serine/threonine protein kinase"/>
    <property type="match status" value="1"/>
</dbReference>
<dbReference type="FunFam" id="3.30.310.80:FF:000003">
    <property type="entry name" value="Non-specific serine/threonine protein kinase"/>
    <property type="match status" value="1"/>
</dbReference>
<dbReference type="Gene3D" id="1.10.8.10">
    <property type="entry name" value="DNA helicase RuvA subunit, C-terminal domain"/>
    <property type="match status" value="1"/>
</dbReference>
<dbReference type="Gene3D" id="3.30.310.80">
    <property type="entry name" value="Kinase associated domain 1, KA1"/>
    <property type="match status" value="1"/>
</dbReference>
<dbReference type="Gene3D" id="3.30.200.20">
    <property type="entry name" value="Phosphorylase Kinase, domain 1"/>
    <property type="match status" value="1"/>
</dbReference>
<dbReference type="Gene3D" id="1.10.510.10">
    <property type="entry name" value="Transferase(Phosphotransferase) domain 1"/>
    <property type="match status" value="1"/>
</dbReference>
<dbReference type="InterPro" id="IPR032270">
    <property type="entry name" value="AMPK_C"/>
</dbReference>
<dbReference type="InterPro" id="IPR039137">
    <property type="entry name" value="AMPKA1_C"/>
</dbReference>
<dbReference type="InterPro" id="IPR028375">
    <property type="entry name" value="KA1/Ssp2_C"/>
</dbReference>
<dbReference type="InterPro" id="IPR011009">
    <property type="entry name" value="Kinase-like_dom_sf"/>
</dbReference>
<dbReference type="InterPro" id="IPR049020">
    <property type="entry name" value="PRKAA1/2_AID"/>
</dbReference>
<dbReference type="InterPro" id="IPR028797">
    <property type="entry name" value="PRKAA1_UBA"/>
</dbReference>
<dbReference type="InterPro" id="IPR000719">
    <property type="entry name" value="Prot_kinase_dom"/>
</dbReference>
<dbReference type="InterPro" id="IPR017441">
    <property type="entry name" value="Protein_kinase_ATP_BS"/>
</dbReference>
<dbReference type="InterPro" id="IPR008271">
    <property type="entry name" value="Ser/Thr_kinase_AS"/>
</dbReference>
<dbReference type="PANTHER" id="PTHR24346:SF87">
    <property type="entry name" value="ACETYL-COA CARBOXYLASE KINASE"/>
    <property type="match status" value="1"/>
</dbReference>
<dbReference type="PANTHER" id="PTHR24346">
    <property type="entry name" value="MAP/MICROTUBULE AFFINITY-REGULATING KINASE"/>
    <property type="match status" value="1"/>
</dbReference>
<dbReference type="Pfam" id="PF16579">
    <property type="entry name" value="AdenylateSensor"/>
    <property type="match status" value="1"/>
</dbReference>
<dbReference type="Pfam" id="PF21147">
    <property type="entry name" value="AMPK_alpha_AID"/>
    <property type="match status" value="1"/>
</dbReference>
<dbReference type="Pfam" id="PF00069">
    <property type="entry name" value="Pkinase"/>
    <property type="match status" value="1"/>
</dbReference>
<dbReference type="SMART" id="SM00220">
    <property type="entry name" value="S_TKc"/>
    <property type="match status" value="1"/>
</dbReference>
<dbReference type="SUPFAM" id="SSF103243">
    <property type="entry name" value="KA1-like"/>
    <property type="match status" value="1"/>
</dbReference>
<dbReference type="SUPFAM" id="SSF56112">
    <property type="entry name" value="Protein kinase-like (PK-like)"/>
    <property type="match status" value="1"/>
</dbReference>
<dbReference type="PROSITE" id="PS00107">
    <property type="entry name" value="PROTEIN_KINASE_ATP"/>
    <property type="match status" value="1"/>
</dbReference>
<dbReference type="PROSITE" id="PS50011">
    <property type="entry name" value="PROTEIN_KINASE_DOM"/>
    <property type="match status" value="1"/>
</dbReference>
<dbReference type="PROSITE" id="PS00108">
    <property type="entry name" value="PROTEIN_KINASE_ST"/>
    <property type="match status" value="1"/>
</dbReference>
<sequence length="559" mass="63973">MRRLSSWRKMATAEKQKHDGRVKIGHYILGDTLGVGTFGKVKVGKHELTGHKVAVKILNRQKIRSLDVVGKIRREIQNLKLFRHPHIIKLYQVISTPSDIFMVMEYVSGGELFDYICKNGRLDEKESRRLFQQILSGVDYCHRHMVVHRDLKPENVLLDAHMNAKIADFGLSNMMSDGEFLRTSCGSPNYAAPEVISGRLYAGPEVDIWSSGVILYALLCGTLPFDDDHVPTLFKKICDGIFYTPQYLNPSVISLLKHMLQVDPMKRATIKDIREHEWFKQDLPKYLFPEDPSYSSTMIDDEALKEVCEKFECSEEEVLSCLYNRNHQDPLAVAYHLIIDNRRIMNEAKDFYLATSPPDSFLDDHHLTRPHPERVPFLVAETPRARHTLDELNPQKSKHQGVRKAKWHLGIRSQSRPNDIMAEVCRAIKQLDYEWKVVNPYYLRVRRKNPVTSTFSKMSLQLYQVDSRTYLLDFRSIDDEITEAKSGTATPQRSGSISNYRSCQRSDSDAEAQGKPSEVSLTSSVTSLDSSPVDVAPRPGSHTIEFFEMCANLIKILAQ</sequence>
<comment type="function">
    <text evidence="2 3 7 8 9 10 11 12 14 16 19 21 24 27">Catalytic subunit of AMP-activated protein kinase (AMPK), an energy sensor protein kinase that plays a key role in regulating cellular energy metabolism (PubMed:14511394). In response to reduction of intracellular ATP levels, AMPK activates energy-producing pathways and inhibits energy-consuming processes: inhibits protein, carbohydrate and lipid biosynthesis, as well as cell growth and proliferation (By similarity). AMPK acts via direct phosphorylation of metabolic enzymes, and by longer-term effects via phosphorylation of transcription regulators (By similarity). Regulates lipid synthesis by phosphorylating and inactivating lipid metabolic enzymes such as ACACA, ACACB, GYS1, HMGCR and LIPE; regulates fatty acid and cholesterol synthesis by phosphorylating acetyl-CoA carboxylase (ACACA and ACACB) and hormone-sensitive lipase (LIPE) enzymes, respectively (PubMed:2369897, PubMed:9029219). Promotes lipolysis of lipid droplets by mediating phosphorylation of isoform 1 of CHKA (CHKalpha2) (By similarity). Regulates insulin-signaling and glycolysis by phosphorylating IRS1, PFKFB2 and PFKFB3 (PubMed:11069105, PubMed:11598104, PubMed:12065600). AMPK stimulates glucose uptake in muscle by increasing the translocation of the glucose transporter SLC2A4/GLUT4 to the plasma membrane, possibly by mediating phosphorylation of TBC1D4/AS160 (By similarity). Regulates transcription and chromatin structure by phosphorylating transcription regulators involved in energy metabolism such as CRTC2/TORC2, FOXO3, histone H2B, HDAC5, MEF2C, MLXIPL/ChREBP, EP300, HNF4A, p53/TP53, SREBF1, SREBF2 and PPARGC1A (PubMed:11724780, PubMed:12740371). Acts as a key regulator of glucose homeostasis in liver by phosphorylating CRTC2/TORC2, leading to CRTC2/TORC2 sequestration in the cytoplasm (By similarity). In response to stress, phosphorylates 'Ser-36' of histone H2B (H2BS36ph), leading to promote transcription (By similarity). Acts as a key regulator of cell growth and proliferation by phosphorylating FNIP1, TSC2, RPTOR, WDR24 and ATG1/ULK1: in response to nutrient limitation, negatively regulates the mTORC1 complex by phosphorylating RPTOR component of the mTORC1 complex and by phosphorylating and activating TSC2 (By similarity). Also phosphorylates and inhibits GATOR2 subunit WDR24 in response to nutrient limitation, leading to suppress glucose-mediated mTORC1 activation (By similarity). In response to energetic stress, phosphorylates FNIP1, inactivating the non-canonical mTORC1 signaling, thereby promoting nuclear translocation of TFEB and TFE3, and inducing transcription of lysosomal or autophagy genes (By similarity). In response to nutrient limitation, promotes autophagy by phosphorylating and activating ATG1/ULK1 (By similarity). In that process, it also activates WDR45/WIPI4. Phosphorylates CASP6, thereby preventing its autoprocessing and subsequent activation (By similarity). In response to nutrient limitation, phosphorylates transcription factor FOXO3 promoting FOXO3 mitochondrial import (By similarity). Also acts as a regulator of cellular polarity by remodeling the actin cytoskeleton; probably by indirectly activating myosin (By similarity). AMPK also acts as a regulator of circadian rhythm by mediating phosphorylation of CRY1, leading to destabilize it (By similarity). May regulate the Wnt signaling pathway by phosphorylating CTNNB1, leading to stabilize it (By similarity). Also has tau-protein kinase activity: in response to amyloid beta A4 protein (APP) exposure, activated by CAMKK2, leading to phosphorylation of MAPT/TAU; however the relevance of such data remains unclear in vivo (PubMed:21204788). Also phosphorylates CFTR, EEF2K, KLC1, NOS3 and SLC12A1 (PubMed:10025949, PubMed:14709557, PubMed:17341212). Regulates hepatic lipogenesis. Activated via SIRT3, represses sterol regulatory element-binding protein (SREBP) transcriptional activities and ATP-consuming lipogenesis to restore cellular energy balance. Upon stress, regulates mitochondrial fragmentation through phosphorylation of MTFR1L (By similarity).</text>
</comment>
<comment type="catalytic activity">
    <reaction evidence="24 27">
        <text>L-seryl-[protein] + ATP = O-phospho-L-seryl-[protein] + ADP + H(+)</text>
        <dbReference type="Rhea" id="RHEA:17989"/>
        <dbReference type="Rhea" id="RHEA-COMP:9863"/>
        <dbReference type="Rhea" id="RHEA-COMP:11604"/>
        <dbReference type="ChEBI" id="CHEBI:15378"/>
        <dbReference type="ChEBI" id="CHEBI:29999"/>
        <dbReference type="ChEBI" id="CHEBI:30616"/>
        <dbReference type="ChEBI" id="CHEBI:83421"/>
        <dbReference type="ChEBI" id="CHEBI:456216"/>
        <dbReference type="EC" id="2.7.11.1"/>
    </reaction>
</comment>
<comment type="catalytic activity">
    <reaction evidence="24 27">
        <text>L-threonyl-[protein] + ATP = O-phospho-L-threonyl-[protein] + ADP + H(+)</text>
        <dbReference type="Rhea" id="RHEA:46608"/>
        <dbReference type="Rhea" id="RHEA-COMP:11060"/>
        <dbReference type="Rhea" id="RHEA-COMP:11605"/>
        <dbReference type="ChEBI" id="CHEBI:15378"/>
        <dbReference type="ChEBI" id="CHEBI:30013"/>
        <dbReference type="ChEBI" id="CHEBI:30616"/>
        <dbReference type="ChEBI" id="CHEBI:61977"/>
        <dbReference type="ChEBI" id="CHEBI:456216"/>
        <dbReference type="EC" id="2.7.11.1"/>
    </reaction>
</comment>
<comment type="catalytic activity">
    <reaction evidence="27">
        <text>L-seryl-[acetyl-CoA carboxylase] + ATP = O-phospho-L-seryl-[acetyl-CoA carboxylase] + ADP + H(+)</text>
        <dbReference type="Rhea" id="RHEA:20333"/>
        <dbReference type="Rhea" id="RHEA-COMP:13722"/>
        <dbReference type="Rhea" id="RHEA-COMP:13723"/>
        <dbReference type="ChEBI" id="CHEBI:15378"/>
        <dbReference type="ChEBI" id="CHEBI:29999"/>
        <dbReference type="ChEBI" id="CHEBI:30616"/>
        <dbReference type="ChEBI" id="CHEBI:83421"/>
        <dbReference type="ChEBI" id="CHEBI:456216"/>
    </reaction>
</comment>
<comment type="catalytic activity">
    <reaction evidence="24">
        <text>L-seryl-[3-hydroxy-3-methylglutaryl-coenzyme A reductase] + ATP = O-phospho-L-seryl-[3-hydroxy-3-methylglutaryl-coenzyme A reductase] + ADP + H(+)</text>
        <dbReference type="Rhea" id="RHEA:23172"/>
        <dbReference type="Rhea" id="RHEA-COMP:13692"/>
        <dbReference type="Rhea" id="RHEA-COMP:13693"/>
        <dbReference type="ChEBI" id="CHEBI:15378"/>
        <dbReference type="ChEBI" id="CHEBI:29999"/>
        <dbReference type="ChEBI" id="CHEBI:30616"/>
        <dbReference type="ChEBI" id="CHEBI:83421"/>
        <dbReference type="ChEBI" id="CHEBI:456216"/>
        <dbReference type="EC" id="2.7.11.31"/>
    </reaction>
</comment>
<comment type="catalytic activity">
    <reaction evidence="29">
        <text>L-seryl-[tau protein] + ATP = O-phospho-L-seryl-[tau protein] + ADP + H(+)</text>
        <dbReference type="Rhea" id="RHEA:12801"/>
        <dbReference type="Rhea" id="RHEA-COMP:13701"/>
        <dbReference type="Rhea" id="RHEA-COMP:13702"/>
        <dbReference type="ChEBI" id="CHEBI:15378"/>
        <dbReference type="ChEBI" id="CHEBI:29999"/>
        <dbReference type="ChEBI" id="CHEBI:30616"/>
        <dbReference type="ChEBI" id="CHEBI:83421"/>
        <dbReference type="ChEBI" id="CHEBI:456216"/>
        <dbReference type="EC" id="2.7.11.26"/>
    </reaction>
</comment>
<comment type="catalytic activity">
    <reaction evidence="29">
        <text>L-threonyl-[tau protein] + ATP = O-phospho-L-threonyl-[tau protein] + ADP + H(+)</text>
        <dbReference type="Rhea" id="RHEA:53904"/>
        <dbReference type="Rhea" id="RHEA-COMP:13703"/>
        <dbReference type="Rhea" id="RHEA-COMP:13704"/>
        <dbReference type="ChEBI" id="CHEBI:15378"/>
        <dbReference type="ChEBI" id="CHEBI:30013"/>
        <dbReference type="ChEBI" id="CHEBI:30616"/>
        <dbReference type="ChEBI" id="CHEBI:61977"/>
        <dbReference type="ChEBI" id="CHEBI:456216"/>
        <dbReference type="EC" id="2.7.11.26"/>
    </reaction>
</comment>
<comment type="cofactor">
    <cofactor evidence="1">
        <name>Mg(2+)</name>
        <dbReference type="ChEBI" id="CHEBI:18420"/>
    </cofactor>
</comment>
<comment type="activity regulation">
    <text evidence="14 15 17 18 26">Activated by phosphorylation on Thr-183. Binding of AMP to non-catalytic gamma subunit (PRKAG1, PRKAG2 or PRKAG3) results in allosteric activation, inducing phosphorylation on Thr-183. AMP-binding to gamma subunit also sustains activity by preventing dephosphorylation of Thr-183. ADP also stimulates Thr-183 phosphorylation, without stimulating already phosphorylated AMPK. ATP promotes dephosphorylation of Thr-183, rendering the enzyme inactive. Under physiological conditions AMPK mainly exists in its inactive form in complex with ATP, which is much more abundant than AMP. Selectively inhibited by compound C (6-[4-(2-Piperidin-1-yl-ethoxy)-phenyl)]-3-pyridin-4-yl-pyyrazolo[1,5-a] pyrimidine. Activated by resveratrol, a natural polyphenol present in red wine, and S17834, a synthetic polyphenol.</text>
</comment>
<comment type="subunit">
    <text evidence="2 20 22 25">AMPK is a heterotrimer of an alpha catalytic subunit (PRKAA1 or PRKAA2), a beta (PRKAB1 or PRKAB2) and a gamma non-catalytic subunits (PRKAG1, PRKAG2 or PRKAG3) (PubMed:17851531, PubMed:21399626, PubMed:7961907). Interacts with FNIP1 and FNIP2 (By similarity).</text>
</comment>
<comment type="interaction">
    <interactant intactId="EBI-7596967">
        <id>P54645</id>
    </interactant>
    <interactant intactId="EBI-7596839">
        <id>Q76JQ2</id>
        <label>Flcn</label>
    </interactant>
    <organismsDiffer>false</organismsDiffer>
    <experiments>2</experiments>
</comment>
<comment type="subcellular location">
    <subcellularLocation>
        <location evidence="2">Cytoplasm</location>
    </subcellularLocation>
    <subcellularLocation>
        <location evidence="2">Nucleus</location>
    </subcellularLocation>
    <text evidence="2">In response to stress, recruited by p53/TP53 to specific promoters.</text>
</comment>
<comment type="tissue specificity">
    <text>Low expression in kidney, liver, lung, heart and brain.</text>
</comment>
<comment type="domain">
    <text evidence="2">The AIS (autoinhibitory sequence) region shows some sequence similarity with the ubiquitin-associated domains and represses kinase activity.</text>
</comment>
<comment type="PTM">
    <text evidence="3">Ubiquitinated.</text>
</comment>
<comment type="PTM">
    <text evidence="2">Phosphorylated at Thr-183 by STK11/LKB1 in complex with STE20-related adapter-alpha (STRADA) pseudo kinase and CAB39. Also phosphorylated at Thr-183 by CAMKK2; triggered by a rise in intracellular calcium ions, without detectable changes in the AMP/ATP ratio. CAMKK1 can also phosphorylate Thr-183, but at a much lower level. Dephosphorylated by protein phosphatase 2A and 2C (PP2A and PP2C). Phosphorylated by ULK1 and ULK2; leading to negatively regulate AMPK activity and suggesting the existence of a regulatory feedback loop between ULK1, ULK2 and AMPK. There is some ambiguity for some phosphosites: Ser-360/Thr-368 and Ser-486/Thr-488. Dephosphorylated by PPM1A and PPM1B (By similarity).</text>
</comment>
<comment type="PTM">
    <text evidence="2">Glycosylated; O-GlcNAcylated by OGT, promoting the AMP-activated protein kinase (AMPK) activity.</text>
</comment>
<comment type="similarity">
    <text evidence="28">Belongs to the protein kinase superfamily. CAMK Ser/Thr protein kinase family. SNF1 subfamily.</text>
</comment>
<reference key="1">
    <citation type="submission" date="2005-07" db="EMBL/GenBank/DDBJ databases">
        <authorList>
            <person name="Mural R.J."/>
            <person name="Adams M.D."/>
            <person name="Myers E.W."/>
            <person name="Smith H.O."/>
            <person name="Venter J.C."/>
        </authorList>
    </citation>
    <scope>NUCLEOTIDE SEQUENCE [LARGE SCALE GENOMIC DNA]</scope>
</reference>
<reference key="2">
    <citation type="journal article" date="1996" name="J. Biol. Chem.">
        <title>Mammalian AMP-activated protein kinase subfamily.</title>
        <authorList>
            <person name="Stapleton D."/>
            <person name="Mitchelhill K.I."/>
            <person name="Gao G."/>
            <person name="Widmer J."/>
            <person name="Michell B.J."/>
            <person name="Teh T."/>
            <person name="House C.M."/>
            <person name="Fernandez C.S."/>
            <person name="Cox T."/>
            <person name="Witters L.A."/>
            <person name="Kemp B.E."/>
        </authorList>
    </citation>
    <scope>NUCLEOTIDE SEQUENCE [MRNA] OF 10-559</scope>
    <scope>PROTEIN SEQUENCE OF 24-40; 90-115; 129-140; 150-160; 166-182; 236-257; 272-276; 286-305; 326-341; 350-367; 375-384; 409-426; 437-446; 458-475 AND 507-517</scope>
    <source>
        <strain>Sprague-Dawley</strain>
        <tissue>Hypothalamus</tissue>
        <tissue>Liver</tissue>
    </source>
</reference>
<reference key="3">
    <citation type="journal article" date="1990" name="EMBO J.">
        <title>Regulation of HMG-CoA reductase: identification of the site phosphorylated by the AMP-activated protein kinase in vitro and in intact rat liver.</title>
        <authorList>
            <person name="Clarke P.R."/>
            <person name="Hardie D.G."/>
        </authorList>
    </citation>
    <scope>CATALYTIC ACTIVITY</scope>
    <scope>FUNCTION IN PHOSPHORYLATION OF HMGCR</scope>
</reference>
<reference key="4">
    <citation type="journal article" date="1994" name="J. Biol. Chem.">
        <title>Mammalian 5'-AMP-activated protein kinase non-catalytic subunits are homologs of proteins that interact with yeast Snf1 protein kinase.</title>
        <authorList>
            <person name="Stapleton D."/>
            <person name="Gao G."/>
            <person name="Michell B.J."/>
            <person name="Widmer J."/>
            <person name="Mitchelhill K.I."/>
            <person name="Teh T."/>
            <person name="House C.M."/>
            <person name="Witters L.A."/>
            <person name="Kemp B.E."/>
        </authorList>
    </citation>
    <scope>IDENTIFICATION IN THE AMPK COMPLEX</scope>
    <source>
        <strain>Sprague-Dawley</strain>
        <tissue>Hypothalamus</tissue>
        <tissue>Liver</tissue>
    </source>
</reference>
<reference key="5">
    <citation type="journal article" date="1996" name="J. Biol. Chem.">
        <title>Characterization of the AMP-activated protein kinase kinase from rat liver and identification of threonine 172 as the major site at which it phosphorylates AMP-activated protein kinase.</title>
        <authorList>
            <person name="Hawley S.A."/>
            <person name="Davison M."/>
            <person name="Woods A."/>
            <person name="Davies S.P."/>
            <person name="Beri R.K."/>
            <person name="Carling D."/>
            <person name="Hardie D.G."/>
        </authorList>
    </citation>
    <scope>PHOSPHORYLATION AT THR-183</scope>
    <scope>ACTIVITY REGULATION</scope>
</reference>
<reference key="6">
    <citation type="journal article" date="1997" name="J. Appl. Physiol.">
        <title>Phosphorylation of rat muscle acetyl-CoA carboxylase by AMP-activated protein kinase and protein kinase A.</title>
        <authorList>
            <person name="Winder W.W."/>
            <person name="Wilson H.A."/>
            <person name="Hardie D.G."/>
            <person name="Rasmussen B.B."/>
            <person name="Hutber C.A."/>
            <person name="Call G.B."/>
            <person name="Clayton R.D."/>
            <person name="Conley L.M."/>
            <person name="Yoon S."/>
            <person name="Zhou B."/>
        </authorList>
    </citation>
    <scope>CATALYTIC ACTIVITY</scope>
    <scope>FUNCTION IN PHOSPHORYLATION OF ACACA AND ACACB</scope>
</reference>
<reference key="7">
    <citation type="journal article" date="1999" name="FEBS Lett.">
        <title>AMP-activated protein kinase phosphorylation of endothelial NO synthase.</title>
        <authorList>
            <person name="Chen Z.P."/>
            <person name="Mitchelhill K.I."/>
            <person name="Michell B.J."/>
            <person name="Stapleton D."/>
            <person name="Rodriguez-Crespo I."/>
            <person name="Witters L.A."/>
            <person name="Power D.A."/>
            <person name="Ortiz de Montellano P.R."/>
            <person name="Kemp B.E."/>
        </authorList>
    </citation>
    <scope>FUNCTION IN PHOSPHORYLATION OF NOS3</scope>
</reference>
<reference key="8">
    <citation type="journal article" date="2000" name="Curr. Biol.">
        <title>Phosphorylation and activation of heart PFK-2 by AMPK has a role in the stimulation of glycolysis during ischaemia.</title>
        <authorList>
            <person name="Marsin A.S."/>
            <person name="Bertrand L."/>
            <person name="Rider M.H."/>
            <person name="Deprez J."/>
            <person name="Beauloye C."/>
            <person name="Vincent M.F."/>
            <person name="Van den Berghe G."/>
            <person name="Carling D."/>
            <person name="Hue L."/>
        </authorList>
    </citation>
    <scope>FUNCTION IN PHOSPHORYLATION OF PFKFB2</scope>
</reference>
<reference key="9">
    <citation type="journal article" date="2001" name="J. Biol. Chem.">
        <title>5'-AMP-activated protein kinase phosphorylates IRS-1 on Ser-789 in mouse C2C12 myotubes in response to 5-aminoimidazole-4-carboxamide riboside.</title>
        <authorList>
            <person name="Jakobsen S.N."/>
            <person name="Hardie D.G."/>
            <person name="Morrice N."/>
            <person name="Tornqvist H.E."/>
        </authorList>
    </citation>
    <scope>FUNCTION IN PHOSPHORYLATION OF IRS1</scope>
</reference>
<reference key="10">
    <citation type="journal article" date="2002" name="J. Biol. Chem.">
        <title>Mechanism for fatty acid 'sparing' effect on glucose-induced transcription: regulation of carbohydrate-responsive element-binding protein by AMP-activated protein kinase.</title>
        <authorList>
            <person name="Kawaguchi T."/>
            <person name="Osatomi K."/>
            <person name="Yamashita H."/>
            <person name="Kabashima T."/>
            <person name="Uyeda K."/>
        </authorList>
    </citation>
    <scope>FUNCTION IN PHOSPHORYLATION OF MLXIPL</scope>
</reference>
<reference key="11">
    <citation type="journal article" date="2002" name="J. Biol. Chem.">
        <title>The stimulation of glycolysis by hypoxia in activated monocytes is mediated by AMP-activated protein kinase and inducible 6-phosphofructo-2-kinase.</title>
        <authorList>
            <person name="Marsin A.S."/>
            <person name="Bouzin C."/>
            <person name="Bertrand L."/>
            <person name="Hue L."/>
        </authorList>
    </citation>
    <scope>FUNCTION IN PHOSPHORYLATION OF PFKFB3</scope>
</reference>
<reference key="12">
    <citation type="journal article" date="2003" name="Curr. Biol.">
        <title>LKB1 is the upstream kinase in the AMP-activated protein kinase cascade.</title>
        <authorList>
            <person name="Woods A."/>
            <person name="Johnstone S.R."/>
            <person name="Dickerson K."/>
            <person name="Leiper F.C."/>
            <person name="Fryer L.G."/>
            <person name="Neumann D."/>
            <person name="Schlattner U."/>
            <person name="Wallimann T."/>
            <person name="Carlson M."/>
            <person name="Carling D."/>
        </authorList>
    </citation>
    <scope>PHOSPHORYLATION AT THR-183</scope>
    <scope>ACTIVITY REGULATION</scope>
</reference>
<reference key="13">
    <citation type="journal article" date="2003" name="J. Biol.">
        <title>Complexes between the LKB1 tumor suppressor, STRAD alpha/beta and MO25 alpha/beta are upstream kinases in the AMP-activated protein kinase cascade.</title>
        <authorList>
            <person name="Hawley S.A."/>
            <person name="Boudeau J."/>
            <person name="Reid J.L."/>
            <person name="Mustard K.J."/>
            <person name="Udd L."/>
            <person name="Makela T.P."/>
            <person name="Alessi D.R."/>
            <person name="Hardie D.G."/>
        </authorList>
    </citation>
    <scope>FUNCTION</scope>
    <scope>ACTIVITY REGULATION</scope>
    <scope>PHOSPHORYLATION AT THR-183</scope>
</reference>
<reference key="14">
    <citation type="journal article" date="2003" name="J. Biol. Chem.">
        <title>AMP-activated protein kinase regulates HNF4alpha transcriptional activity by inhibiting dimer formation and decreasing protein stability.</title>
        <authorList>
            <person name="Hong Y.H."/>
            <person name="Varanasi U.S."/>
            <person name="Yang W."/>
            <person name="Leff T."/>
        </authorList>
    </citation>
    <scope>FUNCTION IN PHOSPHORYLATION OF HNF4A</scope>
</reference>
<reference key="15">
    <citation type="journal article" date="2003" name="J. Biol. Chem.">
        <title>Identification of phosphorylation sites in AMP-activated protein kinase (AMPK) for upstream AMPK kinases and study of their roles by site-directed mutagenesis.</title>
        <authorList>
            <person name="Woods A."/>
            <person name="Vertommen D."/>
            <person name="Neumann D."/>
            <person name="Turk R."/>
            <person name="Bayliss J."/>
            <person name="Schlattner U."/>
            <person name="Wallimann T."/>
            <person name="Carling D."/>
            <person name="Rider M.H."/>
        </authorList>
    </citation>
    <scope>PHOSPHORYLATION AT THR-269 AND SER-496</scope>
    <scope>MUTAGENESIS OF THR-183; THR-269 AND SER-496</scope>
    <scope>IDENTIFICATION BY MASS SPECTROMETRY</scope>
</reference>
<reference key="16">
    <citation type="journal article" date="2004" name="J. Biol. Chem.">
        <title>Stimulation of the AMP-activated protein kinase leads to activation of eukaryotic elongation factor 2 kinase and to its phosphorylation at a novel site, serine 398.</title>
        <authorList>
            <person name="Browne G.J."/>
            <person name="Finn S.G."/>
            <person name="Proud C.G."/>
        </authorList>
    </citation>
    <scope>FUNCTION IN PHOSPHORYLATION OF EEF2K</scope>
</reference>
<reference key="17">
    <citation type="journal article" date="2005" name="Cell Metab.">
        <title>Calmodulin-dependent protein kinase kinase-beta is an alternative upstream kinase for AMP-activated protein kinase.</title>
        <authorList>
            <person name="Hawley S.A."/>
            <person name="Pan D.A."/>
            <person name="Mustard K.J."/>
            <person name="Ross L."/>
            <person name="Bain J."/>
            <person name="Edelman A.M."/>
            <person name="Frenguelli B.G."/>
            <person name="Hardie D.G."/>
        </authorList>
    </citation>
    <scope>PHOSPHORYLATION AT THR-183</scope>
    <scope>ACTIVITY REGULATION</scope>
</reference>
<reference key="18">
    <citation type="journal article" date="2005" name="Cell Metab.">
        <title>Ca2+/calmodulin-dependent protein kinase kinase-beta acts upstream of AMP-activated protein kinase in mammalian cells.</title>
        <authorList>
            <person name="Woods A."/>
            <person name="Dickerson K."/>
            <person name="Heath R."/>
            <person name="Hong S.-P."/>
            <person name="Momcilovic M."/>
            <person name="Johnstone S.R."/>
            <person name="Carlson M."/>
            <person name="Carling D."/>
        </authorList>
    </citation>
    <scope>PHOSPHORYLATION AT THR-183</scope>
    <scope>ACTIVITY REGULATION</scope>
</reference>
<reference key="19">
    <citation type="journal article" date="2007" name="Biochem. J.">
        <title>Regulation of the renal-specific Na+-K+-2Cl- co-transporter NKCC2 by AMP-activated protein kinase (AMPK).</title>
        <authorList>
            <person name="Fraser S.A."/>
            <person name="Gimenez I."/>
            <person name="Cook N."/>
            <person name="Jennings I."/>
            <person name="Katerelos M."/>
            <person name="Katsis F."/>
            <person name="Levidiotis V."/>
            <person name="Kemp B.E."/>
            <person name="Power D.A."/>
        </authorList>
    </citation>
    <scope>FUNCTION IN PHOSPHORYLATION OF SLC12A1</scope>
</reference>
<reference key="20">
    <citation type="journal article" date="2011" name="Autophagy">
        <title>Ulk1-mediated phosphorylation of AMPK constitutes a negative regulatory feedback loop.</title>
        <authorList>
            <person name="Loffler A.S."/>
            <person name="Alers S."/>
            <person name="Dieterle A.M."/>
            <person name="Keppeler H."/>
            <person name="Franz-Wachtel M."/>
            <person name="Kundu M."/>
            <person name="Campbell D.G."/>
            <person name="Wesselborg S."/>
            <person name="Alessi D.R."/>
            <person name="Stork B."/>
        </authorList>
    </citation>
    <scope>PHOSPHORYLATION BY ULK1 AND ULK</scope>
    <scope>PHOSPHORYLATION AT SER-360; THR-368; SER-397; SER-486 AND THR-488</scope>
</reference>
<reference key="21">
    <citation type="journal article" date="2011" name="Biochem. J.">
        <title>AMP-activated protein kinase (AMPK) is a tau kinase, activated in response to amyloid beta-peptide exposure.</title>
        <authorList>
            <person name="Thornton C."/>
            <person name="Bright N.J."/>
            <person name="Sastre M."/>
            <person name="Muckett P.J."/>
            <person name="Carling D."/>
        </authorList>
    </citation>
    <scope>FUNCTION IN PHOSPHORYLATION OF MAPT</scope>
</reference>
<reference key="22">
    <citation type="journal article" date="2012" name="Nat. Commun.">
        <title>Quantitative maps of protein phosphorylation sites across 14 different rat organs and tissues.</title>
        <authorList>
            <person name="Lundby A."/>
            <person name="Secher A."/>
            <person name="Lage K."/>
            <person name="Nordsborg N.B."/>
            <person name="Dmytriyev A."/>
            <person name="Lundby C."/>
            <person name="Olsen J.V."/>
        </authorList>
    </citation>
    <scope>PHOSPHORYLATION [LARGE SCALE ANALYSIS] AT SER-486; THR-490 AND SER-496</scope>
    <scope>IDENTIFICATION BY MASS SPECTROMETRY [LARGE SCALE ANALYSIS]</scope>
</reference>
<reference key="23">
    <citation type="journal article" date="2007" name="Nature">
        <title>Structural basis for AMP binding to mammalian AMP-activated protein kinase.</title>
        <authorList>
            <person name="Xiao B."/>
            <person name="Heath R."/>
            <person name="Saiu P."/>
            <person name="Leiper F.C."/>
            <person name="Leone P."/>
            <person name="Jing C."/>
            <person name="Walker P.A."/>
            <person name="Haire L."/>
            <person name="Eccleston J.F."/>
            <person name="Davis C.T."/>
            <person name="Martin S.R."/>
            <person name="Carling D."/>
            <person name="Gamblin S.J."/>
        </authorList>
    </citation>
    <scope>X-RAY CRYSTALLOGRAPHY (2.1 ANGSTROMS) OF 405-557 IN COMPLEX WITH PRKAB2 AND PRKAG1</scope>
</reference>
<reference key="24">
    <citation type="journal article" date="2011" name="Nature">
        <title>Structure of mammalian AMPK and its regulation by ADP.</title>
        <authorList>
            <person name="Xiao B."/>
            <person name="Sanders M.J."/>
            <person name="Underwood E."/>
            <person name="Heath R."/>
            <person name="Mayer F.V."/>
            <person name="Carmena D."/>
            <person name="Jing C."/>
            <person name="Walker P.A."/>
            <person name="Eccleston J.F."/>
            <person name="Haire L.F."/>
            <person name="Saiu P."/>
            <person name="Howell S.A."/>
            <person name="Aasland R."/>
            <person name="Martin S.R."/>
            <person name="Carling D."/>
            <person name="Gamblin S.J."/>
        </authorList>
    </citation>
    <scope>X-RAY CRYSTALLOGRAPHY (2.51 ANGSTROMS) OF 13-559 IN COMPLEX WITH PRKAB2 AND PRKAG1</scope>
    <scope>MUTAGENESIS OF 386-ARG--GLU-391</scope>
</reference>
<gene>
    <name type="primary">Prkaa1</name>
    <name type="synonym">Ampk1</name>
</gene>
<keyword id="KW-0002">3D-structure</keyword>
<keyword id="KW-0067">ATP-binding</keyword>
<keyword id="KW-0072">Autophagy</keyword>
<keyword id="KW-0090">Biological rhythms</keyword>
<keyword id="KW-0152">Cholesterol biosynthesis</keyword>
<keyword id="KW-0153">Cholesterol metabolism</keyword>
<keyword id="KW-0156">Chromatin regulator</keyword>
<keyword id="KW-0963">Cytoplasm</keyword>
<keyword id="KW-0903">Direct protein sequencing</keyword>
<keyword id="KW-0275">Fatty acid biosynthesis</keyword>
<keyword id="KW-0276">Fatty acid metabolism</keyword>
<keyword id="KW-0325">Glycoprotein</keyword>
<keyword id="KW-0418">Kinase</keyword>
<keyword id="KW-0444">Lipid biosynthesis</keyword>
<keyword id="KW-0443">Lipid metabolism</keyword>
<keyword id="KW-0460">Magnesium</keyword>
<keyword id="KW-0479">Metal-binding</keyword>
<keyword id="KW-0547">Nucleotide-binding</keyword>
<keyword id="KW-0539">Nucleus</keyword>
<keyword id="KW-0597">Phosphoprotein</keyword>
<keyword id="KW-1185">Reference proteome</keyword>
<keyword id="KW-0723">Serine/threonine-protein kinase</keyword>
<keyword id="KW-0752">Steroid biosynthesis</keyword>
<keyword id="KW-0753">Steroid metabolism</keyword>
<keyword id="KW-0756">Sterol biosynthesis</keyword>
<keyword id="KW-1207">Sterol metabolism</keyword>
<keyword id="KW-0804">Transcription</keyword>
<keyword id="KW-0805">Transcription regulation</keyword>
<keyword id="KW-0808">Transferase</keyword>
<keyword id="KW-0832">Ubl conjugation</keyword>
<keyword id="KW-0879">Wnt signaling pathway</keyword>
<name>AAPK1_RAT</name>